<reference key="1">
    <citation type="journal article" date="1995" name="Curr. Genet.">
        <title>Codon usage, genetic code and phylogeny of Dictyostelium discoideum mitochondrial DNA as deduced from a 7.3-kb region.</title>
        <authorList>
            <person name="Angata K."/>
            <person name="Kuroe K."/>
            <person name="Yanagisawa K."/>
            <person name="Tanaka Y."/>
        </authorList>
    </citation>
    <scope>NUCLEOTIDE SEQUENCE [GENOMIC DNA]</scope>
    <source>
        <strain>AX3</strain>
    </source>
</reference>
<reference key="2">
    <citation type="journal article" date="2000" name="Mol. Gen. Genet.">
        <title>The mitochondrial DNA of Dictyostelium discoideum: complete sequence, gene content and genome organization.</title>
        <authorList>
            <person name="Ogawa S."/>
            <person name="Yoshino R."/>
            <person name="Angata K."/>
            <person name="Iwamoto M."/>
            <person name="Pi M."/>
            <person name="Kuroe K."/>
            <person name="Matsuo K."/>
            <person name="Morio T."/>
            <person name="Urushihara H."/>
            <person name="Yanagisawa K."/>
            <person name="Tanaka Y."/>
        </authorList>
    </citation>
    <scope>NUCLEOTIDE SEQUENCE [LARGE SCALE GENOMIC DNA]</scope>
    <source>
        <strain>AX3</strain>
    </source>
</reference>
<comment type="function">
    <text evidence="1">Core subunit of the mitochondrial membrane respiratory chain NADH dehydrogenase (Complex I) that is believed to belong to the minimal assembly required for catalysis. Complex I functions in the transfer of electrons from NADH to the respiratory chain. The immediate electron acceptor for the enzyme is believed to be ubiquinone (By similarity).</text>
</comment>
<comment type="catalytic activity">
    <reaction>
        <text>a ubiquinone + NADH + 5 H(+)(in) = a ubiquinol + NAD(+) + 4 H(+)(out)</text>
        <dbReference type="Rhea" id="RHEA:29091"/>
        <dbReference type="Rhea" id="RHEA-COMP:9565"/>
        <dbReference type="Rhea" id="RHEA-COMP:9566"/>
        <dbReference type="ChEBI" id="CHEBI:15378"/>
        <dbReference type="ChEBI" id="CHEBI:16389"/>
        <dbReference type="ChEBI" id="CHEBI:17976"/>
        <dbReference type="ChEBI" id="CHEBI:57540"/>
        <dbReference type="ChEBI" id="CHEBI:57945"/>
        <dbReference type="EC" id="7.1.1.2"/>
    </reaction>
</comment>
<comment type="subcellular location">
    <subcellularLocation>
        <location evidence="3">Mitochondrion membrane</location>
        <topology evidence="3">Multi-pass membrane protein</topology>
    </subcellularLocation>
</comment>
<comment type="similarity">
    <text evidence="3">Belongs to the complex I subunit 6 family.</text>
</comment>
<sequence>MSTLGLLIMLLGIIIMCTLVILRSVNPIYSILNLIVIYGCYASILLTVEMEFLACIYILVNVGAIAVLFLFIVMMININIVEIQETMKKYNIYMIVGIIGVVGLLGILITNYQIRIKEEVIADFSMFLINSEVVQLQATPSYLDFYSLFVETTDIRTMGSNVIYGSYSIWFIMACIILLIGMVGVIYITEDLIIEKRTLNERRRQDINSQVLREYKITIRNYRESK</sequence>
<gene>
    <name type="primary">nad6</name>
    <name type="ORF">DDB_G0294028</name>
</gene>
<accession>Q37314</accession>
<feature type="chain" id="PRO_0000118275" description="NADH-ubiquinone oxidoreductase chain 6">
    <location>
        <begin position="1"/>
        <end position="226"/>
    </location>
</feature>
<feature type="transmembrane region" description="Helical" evidence="2">
    <location>
        <begin position="2"/>
        <end position="22"/>
    </location>
</feature>
<feature type="transmembrane region" description="Helical" evidence="2">
    <location>
        <begin position="28"/>
        <end position="48"/>
    </location>
</feature>
<feature type="transmembrane region" description="Helical" evidence="2">
    <location>
        <begin position="56"/>
        <end position="76"/>
    </location>
</feature>
<feature type="transmembrane region" description="Helical" evidence="2">
    <location>
        <begin position="90"/>
        <end position="110"/>
    </location>
</feature>
<feature type="transmembrane region" description="Helical" evidence="2">
    <location>
        <begin position="169"/>
        <end position="189"/>
    </location>
</feature>
<dbReference type="EC" id="7.1.1.2"/>
<dbReference type="EMBL" id="D16466">
    <property type="protein sequence ID" value="BAA03936.1"/>
    <property type="molecule type" value="Genomic_DNA"/>
</dbReference>
<dbReference type="EMBL" id="AB000109">
    <property type="protein sequence ID" value="BAA78064.1"/>
    <property type="molecule type" value="Genomic_DNA"/>
</dbReference>
<dbReference type="PIR" id="S68158">
    <property type="entry name" value="S68158"/>
</dbReference>
<dbReference type="RefSeq" id="NP_050082.1">
    <property type="nucleotide sequence ID" value="NC_000895.1"/>
</dbReference>
<dbReference type="SMR" id="Q37314"/>
<dbReference type="STRING" id="44689.Q37314"/>
<dbReference type="GeneID" id="2193908"/>
<dbReference type="KEGG" id="ddi:DidioMp15"/>
<dbReference type="dictyBase" id="DDB_G0294028">
    <property type="gene designation" value="nad6"/>
</dbReference>
<dbReference type="VEuPathDB" id="AmoebaDB:DidioMp15"/>
<dbReference type="InParanoid" id="Q37314"/>
<dbReference type="OMA" id="DQINSIG"/>
<dbReference type="PRO" id="PR:Q37314"/>
<dbReference type="Proteomes" id="UP000002195">
    <property type="component" value="Mitochondrion"/>
</dbReference>
<dbReference type="GO" id="GO:0031966">
    <property type="term" value="C:mitochondrial membrane"/>
    <property type="evidence" value="ECO:0007669"/>
    <property type="project" value="UniProtKB-SubCell"/>
</dbReference>
<dbReference type="GO" id="GO:0008137">
    <property type="term" value="F:NADH dehydrogenase (ubiquinone) activity"/>
    <property type="evidence" value="ECO:0007669"/>
    <property type="project" value="UniProtKB-EC"/>
</dbReference>
<dbReference type="Gene3D" id="1.20.120.1200">
    <property type="entry name" value="NADH-ubiquinone/plastoquinone oxidoreductase chain 6, subunit NuoJ"/>
    <property type="match status" value="1"/>
</dbReference>
<dbReference type="InterPro" id="IPR001457">
    <property type="entry name" value="NADH_UbQ/plastoQ_OxRdtase_su6"/>
</dbReference>
<dbReference type="InterPro" id="IPR042106">
    <property type="entry name" value="Nuo/plastoQ_OxRdtase_6_NuoJ"/>
</dbReference>
<dbReference type="PANTHER" id="PTHR33269">
    <property type="entry name" value="NADH-UBIQUINONE OXIDOREDUCTASE CHAIN 6"/>
    <property type="match status" value="1"/>
</dbReference>
<dbReference type="PANTHER" id="PTHR33269:SF17">
    <property type="entry name" value="NADH-UBIQUINONE OXIDOREDUCTASE CHAIN 6"/>
    <property type="match status" value="1"/>
</dbReference>
<dbReference type="Pfam" id="PF00499">
    <property type="entry name" value="Oxidored_q3"/>
    <property type="match status" value="1"/>
</dbReference>
<proteinExistence type="inferred from homology"/>
<evidence type="ECO:0000250" key="1"/>
<evidence type="ECO:0000255" key="2"/>
<evidence type="ECO:0000305" key="3"/>
<geneLocation type="mitochondrion"/>
<protein>
    <recommendedName>
        <fullName>NADH-ubiquinone oxidoreductase chain 6</fullName>
        <ecNumber>7.1.1.2</ecNumber>
    </recommendedName>
    <alternativeName>
        <fullName>NADH dehydrogenase subunit 6</fullName>
    </alternativeName>
</protein>
<name>NU6M_DICDI</name>
<keyword id="KW-0249">Electron transport</keyword>
<keyword id="KW-0472">Membrane</keyword>
<keyword id="KW-0496">Mitochondrion</keyword>
<keyword id="KW-0520">NAD</keyword>
<keyword id="KW-1185">Reference proteome</keyword>
<keyword id="KW-0679">Respiratory chain</keyword>
<keyword id="KW-1278">Translocase</keyword>
<keyword id="KW-0812">Transmembrane</keyword>
<keyword id="KW-1133">Transmembrane helix</keyword>
<keyword id="KW-0813">Transport</keyword>
<keyword id="KW-0830">Ubiquinone</keyword>
<organism>
    <name type="scientific">Dictyostelium discoideum</name>
    <name type="common">Social amoeba</name>
    <dbReference type="NCBI Taxonomy" id="44689"/>
    <lineage>
        <taxon>Eukaryota</taxon>
        <taxon>Amoebozoa</taxon>
        <taxon>Evosea</taxon>
        <taxon>Eumycetozoa</taxon>
        <taxon>Dictyostelia</taxon>
        <taxon>Dictyosteliales</taxon>
        <taxon>Dictyosteliaceae</taxon>
        <taxon>Dictyostelium</taxon>
    </lineage>
</organism>